<proteinExistence type="inferred from homology"/>
<organism>
    <name type="scientific">Bacillus cereus (strain ZK / E33L)</name>
    <dbReference type="NCBI Taxonomy" id="288681"/>
    <lineage>
        <taxon>Bacteria</taxon>
        <taxon>Bacillati</taxon>
        <taxon>Bacillota</taxon>
        <taxon>Bacilli</taxon>
        <taxon>Bacillales</taxon>
        <taxon>Bacillaceae</taxon>
        <taxon>Bacillus</taxon>
        <taxon>Bacillus cereus group</taxon>
    </lineage>
</organism>
<keyword id="KW-1003">Cell membrane</keyword>
<keyword id="KW-0407">Ion channel</keyword>
<keyword id="KW-0406">Ion transport</keyword>
<keyword id="KW-0472">Membrane</keyword>
<keyword id="KW-0479">Metal-binding</keyword>
<keyword id="KW-0915">Sodium</keyword>
<keyword id="KW-0812">Transmembrane</keyword>
<keyword id="KW-1133">Transmembrane helix</keyword>
<keyword id="KW-0813">Transport</keyword>
<evidence type="ECO:0000255" key="1">
    <source>
        <dbReference type="HAMAP-Rule" id="MF_00454"/>
    </source>
</evidence>
<protein>
    <recommendedName>
        <fullName evidence="1">Fluoride-specific ion channel FluC 2</fullName>
    </recommendedName>
</protein>
<comment type="function">
    <text evidence="1">Fluoride-specific ion channel. Important for reducing fluoride concentration in the cell, thus reducing its toxicity.</text>
</comment>
<comment type="catalytic activity">
    <reaction evidence="1">
        <text>fluoride(in) = fluoride(out)</text>
        <dbReference type="Rhea" id="RHEA:76159"/>
        <dbReference type="ChEBI" id="CHEBI:17051"/>
    </reaction>
    <physiologicalReaction direction="left-to-right" evidence="1">
        <dbReference type="Rhea" id="RHEA:76160"/>
    </physiologicalReaction>
</comment>
<comment type="activity regulation">
    <text evidence="1">Na(+) is not transported, but it plays an essential structural role and its presence is essential for fluoride channel function.</text>
</comment>
<comment type="subcellular location">
    <subcellularLocation>
        <location evidence="1">Cell membrane</location>
        <topology evidence="1">Multi-pass membrane protein</topology>
    </subcellularLocation>
</comment>
<comment type="similarity">
    <text evidence="1">Belongs to the fluoride channel Fluc/FEX (TC 1.A.43) family.</text>
</comment>
<dbReference type="EMBL" id="CP000001">
    <property type="protein sequence ID" value="AAU15472.1"/>
    <property type="molecule type" value="Genomic_DNA"/>
</dbReference>
<dbReference type="SMR" id="Q631P3"/>
<dbReference type="KEGG" id="bcz:BCE33L4803"/>
<dbReference type="PATRIC" id="fig|288681.22.peg.551"/>
<dbReference type="Proteomes" id="UP000002612">
    <property type="component" value="Chromosome"/>
</dbReference>
<dbReference type="GO" id="GO:0005886">
    <property type="term" value="C:plasma membrane"/>
    <property type="evidence" value="ECO:0007669"/>
    <property type="project" value="UniProtKB-SubCell"/>
</dbReference>
<dbReference type="GO" id="GO:0062054">
    <property type="term" value="F:fluoride channel activity"/>
    <property type="evidence" value="ECO:0007669"/>
    <property type="project" value="UniProtKB-UniRule"/>
</dbReference>
<dbReference type="GO" id="GO:0046872">
    <property type="term" value="F:metal ion binding"/>
    <property type="evidence" value="ECO:0007669"/>
    <property type="project" value="UniProtKB-KW"/>
</dbReference>
<dbReference type="GO" id="GO:0140114">
    <property type="term" value="P:cellular detoxification of fluoride"/>
    <property type="evidence" value="ECO:0007669"/>
    <property type="project" value="UniProtKB-UniRule"/>
</dbReference>
<dbReference type="HAMAP" id="MF_00454">
    <property type="entry name" value="FluC"/>
    <property type="match status" value="1"/>
</dbReference>
<dbReference type="InterPro" id="IPR003691">
    <property type="entry name" value="FluC"/>
</dbReference>
<dbReference type="NCBIfam" id="TIGR00494">
    <property type="entry name" value="crcB"/>
    <property type="match status" value="1"/>
</dbReference>
<dbReference type="NCBIfam" id="NF010801">
    <property type="entry name" value="PRK14205.1"/>
    <property type="match status" value="1"/>
</dbReference>
<dbReference type="PANTHER" id="PTHR28259">
    <property type="entry name" value="FLUORIDE EXPORT PROTEIN 1-RELATED"/>
    <property type="match status" value="1"/>
</dbReference>
<dbReference type="PANTHER" id="PTHR28259:SF16">
    <property type="entry name" value="FLUORIDE-SPECIFIC ION CHANNEL FLUC 2"/>
    <property type="match status" value="1"/>
</dbReference>
<dbReference type="Pfam" id="PF02537">
    <property type="entry name" value="CRCB"/>
    <property type="match status" value="1"/>
</dbReference>
<reference key="1">
    <citation type="journal article" date="2006" name="J. Bacteriol.">
        <title>Pathogenomic sequence analysis of Bacillus cereus and Bacillus thuringiensis isolates closely related to Bacillus anthracis.</title>
        <authorList>
            <person name="Han C.S."/>
            <person name="Xie G."/>
            <person name="Challacombe J.F."/>
            <person name="Altherr M.R."/>
            <person name="Bhotika S.S."/>
            <person name="Bruce D."/>
            <person name="Campbell C.S."/>
            <person name="Campbell M.L."/>
            <person name="Chen J."/>
            <person name="Chertkov O."/>
            <person name="Cleland C."/>
            <person name="Dimitrijevic M."/>
            <person name="Doggett N.A."/>
            <person name="Fawcett J.J."/>
            <person name="Glavina T."/>
            <person name="Goodwin L.A."/>
            <person name="Hill K.K."/>
            <person name="Hitchcock P."/>
            <person name="Jackson P.J."/>
            <person name="Keim P."/>
            <person name="Kewalramani A.R."/>
            <person name="Longmire J."/>
            <person name="Lucas S."/>
            <person name="Malfatti S."/>
            <person name="McMurry K."/>
            <person name="Meincke L.J."/>
            <person name="Misra M."/>
            <person name="Moseman B.L."/>
            <person name="Mundt M."/>
            <person name="Munk A.C."/>
            <person name="Okinaka R.T."/>
            <person name="Parson-Quintana B."/>
            <person name="Reilly L.P."/>
            <person name="Richardson P."/>
            <person name="Robinson D.L."/>
            <person name="Rubin E."/>
            <person name="Saunders E."/>
            <person name="Tapia R."/>
            <person name="Tesmer J.G."/>
            <person name="Thayer N."/>
            <person name="Thompson L.S."/>
            <person name="Tice H."/>
            <person name="Ticknor L.O."/>
            <person name="Wills P.L."/>
            <person name="Brettin T.S."/>
            <person name="Gilna P."/>
        </authorList>
    </citation>
    <scope>NUCLEOTIDE SEQUENCE [LARGE SCALE GENOMIC DNA]</scope>
    <source>
        <strain>ZK / E33L</strain>
    </source>
</reference>
<feature type="chain" id="PRO_0000110046" description="Fluoride-specific ion channel FluC 2">
    <location>
        <begin position="1"/>
        <end position="118"/>
    </location>
</feature>
<feature type="transmembrane region" description="Helical" evidence="1">
    <location>
        <begin position="1"/>
        <end position="21"/>
    </location>
</feature>
<feature type="transmembrane region" description="Helical" evidence="1">
    <location>
        <begin position="33"/>
        <end position="53"/>
    </location>
</feature>
<feature type="transmembrane region" description="Helical" evidence="1">
    <location>
        <begin position="55"/>
        <end position="75"/>
    </location>
</feature>
<feature type="transmembrane region" description="Helical" evidence="1">
    <location>
        <begin position="93"/>
        <end position="113"/>
    </location>
</feature>
<feature type="binding site" evidence="1">
    <location>
        <position position="70"/>
    </location>
    <ligand>
        <name>Na(+)</name>
        <dbReference type="ChEBI" id="CHEBI:29101"/>
        <note>structural</note>
    </ligand>
</feature>
<feature type="binding site" evidence="1">
    <location>
        <position position="73"/>
    </location>
    <ligand>
        <name>Na(+)</name>
        <dbReference type="ChEBI" id="CHEBI:29101"/>
        <note>structural</note>
    </ligand>
</feature>
<accession>Q631P3</accession>
<name>FLUC2_BACCZ</name>
<sequence>MIEALLVATGGFFGAITRFAISNWFKKRNKTSFPIATFLINITGAFLLGYIIGSGVTTGWQLLLGTGFMGAFTTFSTFKLESVQLLNRKNFSTFLLYLSATYIVGILFAFLGMQLGGI</sequence>
<gene>
    <name evidence="1" type="primary">fluC2</name>
    <name evidence="1" type="synonym">crcB2</name>
    <name type="ordered locus">BCE33L4803</name>
</gene>